<sequence>MAFSARFPLWLLLGVVLLASVSASFAHSGHSGGEAEDESEESRAQNNPYLFRSNKFLTLFKNQHGSLRLLQRFNEDTEKLENLRDYRVLEYCSKPNTLLLPHHSDSDLLVLVLEGQAILVLVNPDGRDTYKLDQGDAIKIQAGTPFYLINPDNNQNLRILNFAITFRRPGTVEDFFLSSTKRLPSYLSAFSKNFLEASYDSPYDEIEQTLLQEEQEGVIVKMPKDQIQEISKHAQSSSRKTLSSQDKPFNLRSRDPIYSNNYGKLYEITPEKNSQLRDLDILLNCLQMNEGALFVPHYNSRATVILVANEGRAEVELVGLEQQQQQGLESMQLRRYAATLSEGDILVIPSSFPVALKAASDLNMVGIGVNAENNERNFLAGNKENVIRQIPRQVSDLTFPGSGEEVEELLENQKESYFVDGQPRHIDAGGKARRAHLPNLFRTFY</sequence>
<proteinExistence type="evidence at protein level"/>
<keyword id="KW-0903">Direct protein sequencing</keyword>
<keyword id="KW-0708">Seed storage protein</keyword>
<keyword id="KW-0732">Signal</keyword>
<keyword id="KW-0758">Storage protein</keyword>
<name>CANA_CANGL</name>
<protein>
    <recommendedName>
        <fullName>Canavalin</fullName>
    </recommendedName>
</protein>
<comment type="function">
    <text>Seed storage protein.</text>
</comment>
<comment type="subunit">
    <text>Homotrimer.</text>
</comment>
<comment type="similarity">
    <text evidence="3">Belongs to the 7S seed storage protein family.</text>
</comment>
<organism>
    <name type="scientific">Canavalia gladiata</name>
    <name type="common">Sword bean</name>
    <name type="synonym">Dolichos gladiatus</name>
    <dbReference type="NCBI Taxonomy" id="3824"/>
    <lineage>
        <taxon>Eukaryota</taxon>
        <taxon>Viridiplantae</taxon>
        <taxon>Streptophyta</taxon>
        <taxon>Embryophyta</taxon>
        <taxon>Tracheophyta</taxon>
        <taxon>Spermatophyta</taxon>
        <taxon>Magnoliopsida</taxon>
        <taxon>eudicotyledons</taxon>
        <taxon>Gunneridae</taxon>
        <taxon>Pentapetalae</taxon>
        <taxon>rosids</taxon>
        <taxon>fabids</taxon>
        <taxon>Fabales</taxon>
        <taxon>Fabaceae</taxon>
        <taxon>Papilionoideae</taxon>
        <taxon>50 kb inversion clade</taxon>
        <taxon>NPAAA clade</taxon>
        <taxon>indigoferoid/millettioid clade</taxon>
        <taxon>Phaseoleae</taxon>
        <taxon>Canavalia</taxon>
    </lineage>
</organism>
<reference key="1">
    <citation type="journal article" date="1988" name="Eur. J. Biochem.">
        <title>cDNAs for canavalin and concanavalin A from Canavalia gladiata seeds. Nucleotide sequence of cDNA for canavalin and RNA blot analysis of canavalin and concanavalin A mRNAs in developing seeds.</title>
        <authorList>
            <person name="Yamauchi D."/>
            <person name="Nakamura K."/>
            <person name="Asahi T."/>
            <person name="Minamikawa T."/>
        </authorList>
    </citation>
    <scope>NUCLEOTIDE SEQUENCE [MRNA]</scope>
    <scope>PROTEIN SEQUENCE OF 27-40</scope>
    <source>
        <tissue>Seed</tissue>
    </source>
</reference>
<reference key="2">
    <citation type="journal article" date="1989" name="Nucleic Acids Res.">
        <title>Nucleotide sequence of the canavalin gene from Canavalia gladiata seeds.</title>
        <authorList>
            <person name="Takei Y."/>
            <person name="Yamauchi D."/>
            <person name="Minamikawa T."/>
        </authorList>
    </citation>
    <scope>NUCLEOTIDE SEQUENCE [GENOMIC DNA]</scope>
    <source>
        <tissue>Seed</tissue>
    </source>
</reference>
<dbReference type="EMBL" id="X06733">
    <property type="protein sequence ID" value="CAA29910.1"/>
    <property type="molecule type" value="mRNA"/>
</dbReference>
<dbReference type="EMBL" id="X15076">
    <property type="protein sequence ID" value="CAA33172.1"/>
    <property type="molecule type" value="Genomic_DNA"/>
</dbReference>
<dbReference type="PIR" id="S00281">
    <property type="entry name" value="S00281"/>
</dbReference>
<dbReference type="SMR" id="P10562"/>
<dbReference type="GO" id="GO:0045735">
    <property type="term" value="F:nutrient reservoir activity"/>
    <property type="evidence" value="ECO:0007669"/>
    <property type="project" value="UniProtKB-KW"/>
</dbReference>
<dbReference type="CDD" id="cd02245">
    <property type="entry name" value="cupin_7S_vicilin-like_C"/>
    <property type="match status" value="1"/>
</dbReference>
<dbReference type="CDD" id="cd02244">
    <property type="entry name" value="cupin_7S_vicilin-like_N"/>
    <property type="match status" value="1"/>
</dbReference>
<dbReference type="FunFam" id="2.60.120.10:FF:000162">
    <property type="entry name" value="Beta-conglycinin beta subunit 1"/>
    <property type="match status" value="1"/>
</dbReference>
<dbReference type="Gene3D" id="2.60.120.10">
    <property type="entry name" value="Jelly Rolls"/>
    <property type="match status" value="2"/>
</dbReference>
<dbReference type="InterPro" id="IPR006045">
    <property type="entry name" value="Cupin_1"/>
</dbReference>
<dbReference type="InterPro" id="IPR014710">
    <property type="entry name" value="RmlC-like_jellyroll"/>
</dbReference>
<dbReference type="InterPro" id="IPR011051">
    <property type="entry name" value="RmlC_Cupin_sf"/>
</dbReference>
<dbReference type="InterPro" id="IPR050253">
    <property type="entry name" value="Seed_Storage-Functional"/>
</dbReference>
<dbReference type="PANTHER" id="PTHR31189">
    <property type="entry name" value="OS03G0336100 PROTEIN-RELATED"/>
    <property type="match status" value="1"/>
</dbReference>
<dbReference type="PANTHER" id="PTHR31189:SF41">
    <property type="entry name" value="VICILIN C72"/>
    <property type="match status" value="1"/>
</dbReference>
<dbReference type="Pfam" id="PF00190">
    <property type="entry name" value="Cupin_1"/>
    <property type="match status" value="2"/>
</dbReference>
<dbReference type="SMART" id="SM00835">
    <property type="entry name" value="Cupin_1"/>
    <property type="match status" value="2"/>
</dbReference>
<dbReference type="SUPFAM" id="SSF51182">
    <property type="entry name" value="RmlC-like cupins"/>
    <property type="match status" value="2"/>
</dbReference>
<evidence type="ECO:0000255" key="1"/>
<evidence type="ECO:0000269" key="2">
    <source>
    </source>
</evidence>
<evidence type="ECO:0000305" key="3"/>
<accession>P10562</accession>
<feature type="signal peptide" evidence="2">
    <location>
        <begin position="1"/>
        <end position="26"/>
    </location>
</feature>
<feature type="chain" id="PRO_0000032175" description="Canavalin">
    <location>
        <begin position="27"/>
        <end position="445"/>
    </location>
</feature>
<feature type="domain" description="Cupin type-1 1" evidence="1">
    <location>
        <begin position="49"/>
        <end position="207"/>
    </location>
</feature>
<feature type="domain" description="Cupin type-1 2" evidence="1">
    <location>
        <begin position="249"/>
        <end position="407"/>
    </location>
</feature>
<feature type="sequence conflict" description="In Ref. 2; CAA33172." evidence="3" ref="2">
    <original>N</original>
    <variation>K</variation>
    <location>
        <position position="161"/>
    </location>
</feature>